<feature type="chain" id="PRO_1000093942" description="4-hydroxy-tetrahydrodipicolinate reductase">
    <location>
        <begin position="1"/>
        <end position="269"/>
    </location>
</feature>
<feature type="active site" description="Proton donor/acceptor" evidence="1">
    <location>
        <position position="155"/>
    </location>
</feature>
<feature type="active site" description="Proton donor" evidence="1">
    <location>
        <position position="159"/>
    </location>
</feature>
<feature type="binding site" evidence="1">
    <location>
        <begin position="8"/>
        <end position="13"/>
    </location>
    <ligand>
        <name>NAD(+)</name>
        <dbReference type="ChEBI" id="CHEBI:57540"/>
    </ligand>
</feature>
<feature type="binding site" evidence="1">
    <location>
        <position position="34"/>
    </location>
    <ligand>
        <name>NAD(+)</name>
        <dbReference type="ChEBI" id="CHEBI:57540"/>
    </ligand>
</feature>
<feature type="binding site" evidence="1">
    <location>
        <begin position="98"/>
        <end position="100"/>
    </location>
    <ligand>
        <name>NAD(+)</name>
        <dbReference type="ChEBI" id="CHEBI:57540"/>
    </ligand>
</feature>
<feature type="binding site" evidence="1">
    <location>
        <begin position="122"/>
        <end position="125"/>
    </location>
    <ligand>
        <name>NAD(+)</name>
        <dbReference type="ChEBI" id="CHEBI:57540"/>
    </ligand>
</feature>
<feature type="binding site" evidence="1">
    <location>
        <position position="156"/>
    </location>
    <ligand>
        <name>(S)-2,3,4,5-tetrahydrodipicolinate</name>
        <dbReference type="ChEBI" id="CHEBI:16845"/>
    </ligand>
</feature>
<feature type="binding site" evidence="1">
    <location>
        <begin position="165"/>
        <end position="166"/>
    </location>
    <ligand>
        <name>(S)-2,3,4,5-tetrahydrodipicolinate</name>
        <dbReference type="ChEBI" id="CHEBI:16845"/>
    </ligand>
</feature>
<proteinExistence type="inferred from homology"/>
<accession>B6ENC8</accession>
<evidence type="ECO:0000255" key="1">
    <source>
        <dbReference type="HAMAP-Rule" id="MF_00102"/>
    </source>
</evidence>
<evidence type="ECO:0000305" key="2"/>
<comment type="function">
    <text evidence="1">Catalyzes the conversion of 4-hydroxy-tetrahydrodipicolinate (HTPA) to tetrahydrodipicolinate.</text>
</comment>
<comment type="catalytic activity">
    <reaction evidence="1">
        <text>(S)-2,3,4,5-tetrahydrodipicolinate + NAD(+) + H2O = (2S,4S)-4-hydroxy-2,3,4,5-tetrahydrodipicolinate + NADH + H(+)</text>
        <dbReference type="Rhea" id="RHEA:35323"/>
        <dbReference type="ChEBI" id="CHEBI:15377"/>
        <dbReference type="ChEBI" id="CHEBI:15378"/>
        <dbReference type="ChEBI" id="CHEBI:16845"/>
        <dbReference type="ChEBI" id="CHEBI:57540"/>
        <dbReference type="ChEBI" id="CHEBI:57945"/>
        <dbReference type="ChEBI" id="CHEBI:67139"/>
        <dbReference type="EC" id="1.17.1.8"/>
    </reaction>
</comment>
<comment type="catalytic activity">
    <reaction evidence="1">
        <text>(S)-2,3,4,5-tetrahydrodipicolinate + NADP(+) + H2O = (2S,4S)-4-hydroxy-2,3,4,5-tetrahydrodipicolinate + NADPH + H(+)</text>
        <dbReference type="Rhea" id="RHEA:35331"/>
        <dbReference type="ChEBI" id="CHEBI:15377"/>
        <dbReference type="ChEBI" id="CHEBI:15378"/>
        <dbReference type="ChEBI" id="CHEBI:16845"/>
        <dbReference type="ChEBI" id="CHEBI:57783"/>
        <dbReference type="ChEBI" id="CHEBI:58349"/>
        <dbReference type="ChEBI" id="CHEBI:67139"/>
        <dbReference type="EC" id="1.17.1.8"/>
    </reaction>
</comment>
<comment type="pathway">
    <text evidence="1">Amino-acid biosynthesis; L-lysine biosynthesis via DAP pathway; (S)-tetrahydrodipicolinate from L-aspartate: step 4/4.</text>
</comment>
<comment type="subcellular location">
    <subcellularLocation>
        <location evidence="1">Cytoplasm</location>
    </subcellularLocation>
</comment>
<comment type="similarity">
    <text evidence="1">Belongs to the DapB family.</text>
</comment>
<comment type="caution">
    <text evidence="2">Was originally thought to be a dihydrodipicolinate reductase (DHDPR), catalyzing the conversion of dihydrodipicolinate to tetrahydrodipicolinate. However, it was shown in E.coli that the substrate of the enzymatic reaction is not dihydrodipicolinate (DHDP) but in fact (2S,4S)-4-hydroxy-2,3,4,5-tetrahydrodipicolinic acid (HTPA), the product released by the DapA-catalyzed reaction.</text>
</comment>
<name>DAPB_ALISL</name>
<protein>
    <recommendedName>
        <fullName evidence="1">4-hydroxy-tetrahydrodipicolinate reductase</fullName>
        <shortName evidence="1">HTPA reductase</shortName>
        <ecNumber evidence="1">1.17.1.8</ecNumber>
    </recommendedName>
</protein>
<organism>
    <name type="scientific">Aliivibrio salmonicida (strain LFI1238)</name>
    <name type="common">Vibrio salmonicida (strain LFI1238)</name>
    <dbReference type="NCBI Taxonomy" id="316275"/>
    <lineage>
        <taxon>Bacteria</taxon>
        <taxon>Pseudomonadati</taxon>
        <taxon>Pseudomonadota</taxon>
        <taxon>Gammaproteobacteria</taxon>
        <taxon>Vibrionales</taxon>
        <taxon>Vibrionaceae</taxon>
        <taxon>Aliivibrio</taxon>
    </lineage>
</organism>
<sequence>MVRVAIAGAAGRMGRNLIKAVNGSQYAVLAAASEHPESSLIGVDVGEMAGLGKSGIVIVDDLAKAVDDFDVIIDFTLPISTLKNIELCQEHNKAIVIGTTGFSEPGKELIDQAAKEIPIVMAPNYSVGVNVVFKLLEKAAKIMGDYCDIEIIEAHHRYKVDAPSGTAIGMGEAIAGAMGNKLDDVAVYTREGITGERTKNEIGFATIRAGDIVGEHTAMFADIGERVEITHKATDRMTFANGAVRASHWLHQKSPGFYTMHDVLDLDQI</sequence>
<reference key="1">
    <citation type="journal article" date="2008" name="BMC Genomics">
        <title>The genome sequence of the fish pathogen Aliivibrio salmonicida strain LFI1238 shows extensive evidence of gene decay.</title>
        <authorList>
            <person name="Hjerde E."/>
            <person name="Lorentzen M.S."/>
            <person name="Holden M.T."/>
            <person name="Seeger K."/>
            <person name="Paulsen S."/>
            <person name="Bason N."/>
            <person name="Churcher C."/>
            <person name="Harris D."/>
            <person name="Norbertczak H."/>
            <person name="Quail M.A."/>
            <person name="Sanders S."/>
            <person name="Thurston S."/>
            <person name="Parkhill J."/>
            <person name="Willassen N.P."/>
            <person name="Thomson N.R."/>
        </authorList>
    </citation>
    <scope>NUCLEOTIDE SEQUENCE [LARGE SCALE GENOMIC DNA]</scope>
    <source>
        <strain>LFI1238</strain>
    </source>
</reference>
<keyword id="KW-0028">Amino-acid biosynthesis</keyword>
<keyword id="KW-0963">Cytoplasm</keyword>
<keyword id="KW-0220">Diaminopimelate biosynthesis</keyword>
<keyword id="KW-0457">Lysine biosynthesis</keyword>
<keyword id="KW-0520">NAD</keyword>
<keyword id="KW-0521">NADP</keyword>
<keyword id="KW-0560">Oxidoreductase</keyword>
<gene>
    <name evidence="1" type="primary">dapB</name>
    <name type="ordered locus">VSAL_I0584</name>
</gene>
<dbReference type="EC" id="1.17.1.8" evidence="1"/>
<dbReference type="EMBL" id="FM178379">
    <property type="protein sequence ID" value="CAQ78269.1"/>
    <property type="molecule type" value="Genomic_DNA"/>
</dbReference>
<dbReference type="RefSeq" id="WP_012549392.1">
    <property type="nucleotide sequence ID" value="NC_011312.1"/>
</dbReference>
<dbReference type="SMR" id="B6ENC8"/>
<dbReference type="KEGG" id="vsa:VSAL_I0584"/>
<dbReference type="eggNOG" id="COG0289">
    <property type="taxonomic scope" value="Bacteria"/>
</dbReference>
<dbReference type="HOGENOM" id="CLU_047479_2_1_6"/>
<dbReference type="UniPathway" id="UPA00034">
    <property type="reaction ID" value="UER00018"/>
</dbReference>
<dbReference type="Proteomes" id="UP000001730">
    <property type="component" value="Chromosome 1"/>
</dbReference>
<dbReference type="GO" id="GO:0005829">
    <property type="term" value="C:cytosol"/>
    <property type="evidence" value="ECO:0007669"/>
    <property type="project" value="TreeGrafter"/>
</dbReference>
<dbReference type="GO" id="GO:0008839">
    <property type="term" value="F:4-hydroxy-tetrahydrodipicolinate reductase"/>
    <property type="evidence" value="ECO:0007669"/>
    <property type="project" value="UniProtKB-EC"/>
</dbReference>
<dbReference type="GO" id="GO:0051287">
    <property type="term" value="F:NAD binding"/>
    <property type="evidence" value="ECO:0007669"/>
    <property type="project" value="UniProtKB-UniRule"/>
</dbReference>
<dbReference type="GO" id="GO:0050661">
    <property type="term" value="F:NADP binding"/>
    <property type="evidence" value="ECO:0007669"/>
    <property type="project" value="UniProtKB-UniRule"/>
</dbReference>
<dbReference type="GO" id="GO:0016726">
    <property type="term" value="F:oxidoreductase activity, acting on CH or CH2 groups, NAD or NADP as acceptor"/>
    <property type="evidence" value="ECO:0007669"/>
    <property type="project" value="UniProtKB-UniRule"/>
</dbReference>
<dbReference type="GO" id="GO:0019877">
    <property type="term" value="P:diaminopimelate biosynthetic process"/>
    <property type="evidence" value="ECO:0007669"/>
    <property type="project" value="UniProtKB-UniRule"/>
</dbReference>
<dbReference type="GO" id="GO:0009089">
    <property type="term" value="P:lysine biosynthetic process via diaminopimelate"/>
    <property type="evidence" value="ECO:0007669"/>
    <property type="project" value="UniProtKB-UniRule"/>
</dbReference>
<dbReference type="CDD" id="cd02274">
    <property type="entry name" value="DHDPR_N"/>
    <property type="match status" value="1"/>
</dbReference>
<dbReference type="FunFam" id="3.30.360.10:FF:000004">
    <property type="entry name" value="4-hydroxy-tetrahydrodipicolinate reductase"/>
    <property type="match status" value="1"/>
</dbReference>
<dbReference type="FunFam" id="3.40.50.720:FF:000048">
    <property type="entry name" value="4-hydroxy-tetrahydrodipicolinate reductase"/>
    <property type="match status" value="1"/>
</dbReference>
<dbReference type="Gene3D" id="3.30.360.10">
    <property type="entry name" value="Dihydrodipicolinate Reductase, domain 2"/>
    <property type="match status" value="1"/>
</dbReference>
<dbReference type="Gene3D" id="3.40.50.720">
    <property type="entry name" value="NAD(P)-binding Rossmann-like Domain"/>
    <property type="match status" value="1"/>
</dbReference>
<dbReference type="HAMAP" id="MF_00102">
    <property type="entry name" value="DapB"/>
    <property type="match status" value="1"/>
</dbReference>
<dbReference type="InterPro" id="IPR022663">
    <property type="entry name" value="DapB_C"/>
</dbReference>
<dbReference type="InterPro" id="IPR000846">
    <property type="entry name" value="DapB_N"/>
</dbReference>
<dbReference type="InterPro" id="IPR022664">
    <property type="entry name" value="DapB_N_CS"/>
</dbReference>
<dbReference type="InterPro" id="IPR023940">
    <property type="entry name" value="DHDPR_bac"/>
</dbReference>
<dbReference type="InterPro" id="IPR036291">
    <property type="entry name" value="NAD(P)-bd_dom_sf"/>
</dbReference>
<dbReference type="NCBIfam" id="TIGR00036">
    <property type="entry name" value="dapB"/>
    <property type="match status" value="1"/>
</dbReference>
<dbReference type="PANTHER" id="PTHR20836:SF0">
    <property type="entry name" value="4-HYDROXY-TETRAHYDRODIPICOLINATE REDUCTASE 1, CHLOROPLASTIC-RELATED"/>
    <property type="match status" value="1"/>
</dbReference>
<dbReference type="PANTHER" id="PTHR20836">
    <property type="entry name" value="DIHYDRODIPICOLINATE REDUCTASE"/>
    <property type="match status" value="1"/>
</dbReference>
<dbReference type="Pfam" id="PF05173">
    <property type="entry name" value="DapB_C"/>
    <property type="match status" value="1"/>
</dbReference>
<dbReference type="Pfam" id="PF01113">
    <property type="entry name" value="DapB_N"/>
    <property type="match status" value="1"/>
</dbReference>
<dbReference type="PIRSF" id="PIRSF000161">
    <property type="entry name" value="DHPR"/>
    <property type="match status" value="1"/>
</dbReference>
<dbReference type="SUPFAM" id="SSF55347">
    <property type="entry name" value="Glyceraldehyde-3-phosphate dehydrogenase-like, C-terminal domain"/>
    <property type="match status" value="1"/>
</dbReference>
<dbReference type="SUPFAM" id="SSF51735">
    <property type="entry name" value="NAD(P)-binding Rossmann-fold domains"/>
    <property type="match status" value="1"/>
</dbReference>
<dbReference type="PROSITE" id="PS01298">
    <property type="entry name" value="DAPB"/>
    <property type="match status" value="1"/>
</dbReference>